<sequence length="283" mass="31545">MTETRRLRILITNDDGIKAKGISLLISLLREADFADLYVVAPLEEQSGRSMAFSLVEPTALEPFDYPQRVQEAWAVTGTPVDCVKLAIGELFKENALDLILSGINNGKNSGRCLYYSATVGAIREANLHGIPAIALSQSENIAFFQKAHMASLIRSLCEFTVAYKHTDPLGLNVNFPASTDDSPWKGIRFTLSGNEFLFGIPRLVRTEGNRRYYTLYDMRDKVSEEFSEEYLALANNYISAAPLVSKNTPRATLSEEELAFLKDSFEQSVLWKASLNLEEDLA</sequence>
<proteinExistence type="inferred from homology"/>
<protein>
    <recommendedName>
        <fullName evidence="1">5'-nucleotidase SurE</fullName>
        <ecNumber evidence="1">3.1.3.5</ecNumber>
    </recommendedName>
    <alternativeName>
        <fullName evidence="1">Nucleoside 5'-monophosphate phosphohydrolase</fullName>
    </alternativeName>
</protein>
<reference key="1">
    <citation type="journal article" date="1998" name="Science">
        <title>Genome sequence of an obligate intracellular pathogen of humans: Chlamydia trachomatis.</title>
        <authorList>
            <person name="Stephens R.S."/>
            <person name="Kalman S."/>
            <person name="Lammel C.J."/>
            <person name="Fan J."/>
            <person name="Marathe R."/>
            <person name="Aravind L."/>
            <person name="Mitchell W.P."/>
            <person name="Olinger L."/>
            <person name="Tatusov R.L."/>
            <person name="Zhao Q."/>
            <person name="Koonin E.V."/>
            <person name="Davis R.W."/>
        </authorList>
    </citation>
    <scope>NUCLEOTIDE SEQUENCE [LARGE SCALE GENOMIC DNA]</scope>
    <source>
        <strain>ATCC VR-885 / DSM 19411 / UW-3/Cx</strain>
    </source>
</reference>
<dbReference type="EC" id="3.1.3.5" evidence="1"/>
<dbReference type="EMBL" id="AE001273">
    <property type="protein sequence ID" value="AAC67810.2"/>
    <property type="molecule type" value="Genomic_DNA"/>
</dbReference>
<dbReference type="PIR" id="A71543">
    <property type="entry name" value="A71543"/>
</dbReference>
<dbReference type="RefSeq" id="NP_219722.1">
    <property type="nucleotide sequence ID" value="NC_000117.1"/>
</dbReference>
<dbReference type="RefSeq" id="WP_009871564.1">
    <property type="nucleotide sequence ID" value="NC_000117.1"/>
</dbReference>
<dbReference type="SMR" id="O84220"/>
<dbReference type="STRING" id="272561.CT_218"/>
<dbReference type="EnsemblBacteria" id="AAC67810">
    <property type="protein sequence ID" value="AAC67810"/>
    <property type="gene ID" value="CT_218"/>
</dbReference>
<dbReference type="GeneID" id="884909"/>
<dbReference type="KEGG" id="ctr:CT_218"/>
<dbReference type="PATRIC" id="fig|272561.5.peg.233"/>
<dbReference type="HOGENOM" id="CLU_045192_1_0_0"/>
<dbReference type="InParanoid" id="O84220"/>
<dbReference type="OrthoDB" id="9780815at2"/>
<dbReference type="Proteomes" id="UP000000431">
    <property type="component" value="Chromosome"/>
</dbReference>
<dbReference type="GO" id="GO:0005737">
    <property type="term" value="C:cytoplasm"/>
    <property type="evidence" value="ECO:0007669"/>
    <property type="project" value="UniProtKB-SubCell"/>
</dbReference>
<dbReference type="GO" id="GO:0008254">
    <property type="term" value="F:3'-nucleotidase activity"/>
    <property type="evidence" value="ECO:0000318"/>
    <property type="project" value="GO_Central"/>
</dbReference>
<dbReference type="GO" id="GO:0008253">
    <property type="term" value="F:5'-nucleotidase activity"/>
    <property type="evidence" value="ECO:0000318"/>
    <property type="project" value="GO_Central"/>
</dbReference>
<dbReference type="GO" id="GO:0004309">
    <property type="term" value="F:exopolyphosphatase activity"/>
    <property type="evidence" value="ECO:0000318"/>
    <property type="project" value="GO_Central"/>
</dbReference>
<dbReference type="GO" id="GO:0046872">
    <property type="term" value="F:metal ion binding"/>
    <property type="evidence" value="ECO:0007669"/>
    <property type="project" value="UniProtKB-UniRule"/>
</dbReference>
<dbReference type="GO" id="GO:0000166">
    <property type="term" value="F:nucleotide binding"/>
    <property type="evidence" value="ECO:0007669"/>
    <property type="project" value="UniProtKB-KW"/>
</dbReference>
<dbReference type="FunFam" id="3.40.1210.10:FF:000004">
    <property type="entry name" value="5'-nucleotidase SurE"/>
    <property type="match status" value="1"/>
</dbReference>
<dbReference type="Gene3D" id="3.40.1210.10">
    <property type="entry name" value="Survival protein SurE-like phosphatase/nucleotidase"/>
    <property type="match status" value="1"/>
</dbReference>
<dbReference type="HAMAP" id="MF_00060">
    <property type="entry name" value="SurE"/>
    <property type="match status" value="1"/>
</dbReference>
<dbReference type="InterPro" id="IPR030048">
    <property type="entry name" value="SurE"/>
</dbReference>
<dbReference type="InterPro" id="IPR002828">
    <property type="entry name" value="SurE-like_Pase/nucleotidase"/>
</dbReference>
<dbReference type="InterPro" id="IPR036523">
    <property type="entry name" value="SurE-like_sf"/>
</dbReference>
<dbReference type="NCBIfam" id="NF001493">
    <property type="entry name" value="PRK00346.2-3"/>
    <property type="match status" value="1"/>
</dbReference>
<dbReference type="NCBIfam" id="TIGR00087">
    <property type="entry name" value="surE"/>
    <property type="match status" value="1"/>
</dbReference>
<dbReference type="PANTHER" id="PTHR30457">
    <property type="entry name" value="5'-NUCLEOTIDASE SURE"/>
    <property type="match status" value="1"/>
</dbReference>
<dbReference type="PANTHER" id="PTHR30457:SF12">
    <property type="entry name" value="5'_3'-NUCLEOTIDASE SURE"/>
    <property type="match status" value="1"/>
</dbReference>
<dbReference type="Pfam" id="PF01975">
    <property type="entry name" value="SurE"/>
    <property type="match status" value="1"/>
</dbReference>
<dbReference type="SUPFAM" id="SSF64167">
    <property type="entry name" value="SurE-like"/>
    <property type="match status" value="1"/>
</dbReference>
<keyword id="KW-0963">Cytoplasm</keyword>
<keyword id="KW-0378">Hydrolase</keyword>
<keyword id="KW-0479">Metal-binding</keyword>
<keyword id="KW-0547">Nucleotide-binding</keyword>
<keyword id="KW-1185">Reference proteome</keyword>
<organism>
    <name type="scientific">Chlamydia trachomatis serovar D (strain ATCC VR-885 / DSM 19411 / UW-3/Cx)</name>
    <dbReference type="NCBI Taxonomy" id="272561"/>
    <lineage>
        <taxon>Bacteria</taxon>
        <taxon>Pseudomonadati</taxon>
        <taxon>Chlamydiota</taxon>
        <taxon>Chlamydiia</taxon>
        <taxon>Chlamydiales</taxon>
        <taxon>Chlamydiaceae</taxon>
        <taxon>Chlamydia/Chlamydophila group</taxon>
        <taxon>Chlamydia</taxon>
    </lineage>
</organism>
<feature type="chain" id="PRO_0000111804" description="5'-nucleotidase SurE">
    <location>
        <begin position="1"/>
        <end position="283"/>
    </location>
</feature>
<feature type="binding site" evidence="1">
    <location>
        <position position="14"/>
    </location>
    <ligand>
        <name>a divalent metal cation</name>
        <dbReference type="ChEBI" id="CHEBI:60240"/>
    </ligand>
</feature>
<feature type="binding site" evidence="1">
    <location>
        <position position="15"/>
    </location>
    <ligand>
        <name>a divalent metal cation</name>
        <dbReference type="ChEBI" id="CHEBI:60240"/>
    </ligand>
</feature>
<feature type="binding site" evidence="1">
    <location>
        <position position="47"/>
    </location>
    <ligand>
        <name>a divalent metal cation</name>
        <dbReference type="ChEBI" id="CHEBI:60240"/>
    </ligand>
</feature>
<feature type="binding site" evidence="1">
    <location>
        <position position="105"/>
    </location>
    <ligand>
        <name>a divalent metal cation</name>
        <dbReference type="ChEBI" id="CHEBI:60240"/>
    </ligand>
</feature>
<accession>O84220</accession>
<comment type="function">
    <text evidence="1">Nucleotidase that shows phosphatase activity on nucleoside 5'-monophosphates.</text>
</comment>
<comment type="catalytic activity">
    <reaction evidence="1">
        <text>a ribonucleoside 5'-phosphate + H2O = a ribonucleoside + phosphate</text>
        <dbReference type="Rhea" id="RHEA:12484"/>
        <dbReference type="ChEBI" id="CHEBI:15377"/>
        <dbReference type="ChEBI" id="CHEBI:18254"/>
        <dbReference type="ChEBI" id="CHEBI:43474"/>
        <dbReference type="ChEBI" id="CHEBI:58043"/>
        <dbReference type="EC" id="3.1.3.5"/>
    </reaction>
</comment>
<comment type="cofactor">
    <cofactor evidence="1">
        <name>a divalent metal cation</name>
        <dbReference type="ChEBI" id="CHEBI:60240"/>
    </cofactor>
    <text evidence="1">Binds 1 divalent metal cation per subunit.</text>
</comment>
<comment type="subcellular location">
    <subcellularLocation>
        <location evidence="1">Cytoplasm</location>
    </subcellularLocation>
</comment>
<comment type="similarity">
    <text evidence="1">Belongs to the SurE nucleotidase family.</text>
</comment>
<evidence type="ECO:0000255" key="1">
    <source>
        <dbReference type="HAMAP-Rule" id="MF_00060"/>
    </source>
</evidence>
<gene>
    <name evidence="1" type="primary">surE</name>
    <name type="ordered locus">CT_218</name>
</gene>
<name>SURE_CHLTR</name>